<proteinExistence type="inferred from homology"/>
<feature type="chain" id="PRO_0000228309" description="Holo-[acyl-carrier-protein] synthase">
    <location>
        <begin position="1"/>
        <end position="116"/>
    </location>
</feature>
<feature type="binding site" evidence="1">
    <location>
        <position position="8"/>
    </location>
    <ligand>
        <name>Mg(2+)</name>
        <dbReference type="ChEBI" id="CHEBI:18420"/>
    </ligand>
</feature>
<feature type="binding site" evidence="1">
    <location>
        <position position="59"/>
    </location>
    <ligand>
        <name>Mg(2+)</name>
        <dbReference type="ChEBI" id="CHEBI:18420"/>
    </ligand>
</feature>
<dbReference type="EC" id="2.7.8.7" evidence="1"/>
<dbReference type="EMBL" id="AP008934">
    <property type="protein sequence ID" value="BAE17951.1"/>
    <property type="molecule type" value="Genomic_DNA"/>
</dbReference>
<dbReference type="RefSeq" id="WP_002482750.1">
    <property type="nucleotide sequence ID" value="NZ_MTGA01000032.1"/>
</dbReference>
<dbReference type="SMR" id="Q49Z25"/>
<dbReference type="GeneID" id="66866962"/>
<dbReference type="KEGG" id="ssp:SSP0806"/>
<dbReference type="eggNOG" id="COG0736">
    <property type="taxonomic scope" value="Bacteria"/>
</dbReference>
<dbReference type="HOGENOM" id="CLU_089696_1_2_9"/>
<dbReference type="OrthoDB" id="517356at2"/>
<dbReference type="Proteomes" id="UP000006371">
    <property type="component" value="Chromosome"/>
</dbReference>
<dbReference type="GO" id="GO:0005737">
    <property type="term" value="C:cytoplasm"/>
    <property type="evidence" value="ECO:0007669"/>
    <property type="project" value="UniProtKB-SubCell"/>
</dbReference>
<dbReference type="GO" id="GO:0008897">
    <property type="term" value="F:holo-[acyl-carrier-protein] synthase activity"/>
    <property type="evidence" value="ECO:0007669"/>
    <property type="project" value="UniProtKB-UniRule"/>
</dbReference>
<dbReference type="GO" id="GO:0000287">
    <property type="term" value="F:magnesium ion binding"/>
    <property type="evidence" value="ECO:0007669"/>
    <property type="project" value="UniProtKB-UniRule"/>
</dbReference>
<dbReference type="GO" id="GO:0006633">
    <property type="term" value="P:fatty acid biosynthetic process"/>
    <property type="evidence" value="ECO:0007669"/>
    <property type="project" value="UniProtKB-UniRule"/>
</dbReference>
<dbReference type="Gene3D" id="3.90.470.20">
    <property type="entry name" value="4'-phosphopantetheinyl transferase domain"/>
    <property type="match status" value="1"/>
</dbReference>
<dbReference type="HAMAP" id="MF_00101">
    <property type="entry name" value="AcpS"/>
    <property type="match status" value="1"/>
</dbReference>
<dbReference type="InterPro" id="IPR008278">
    <property type="entry name" value="4-PPantetheinyl_Trfase_dom"/>
</dbReference>
<dbReference type="InterPro" id="IPR037143">
    <property type="entry name" value="4-PPantetheinyl_Trfase_dom_sf"/>
</dbReference>
<dbReference type="InterPro" id="IPR002582">
    <property type="entry name" value="ACPS"/>
</dbReference>
<dbReference type="InterPro" id="IPR004568">
    <property type="entry name" value="Ppantetheine-prot_Trfase_dom"/>
</dbReference>
<dbReference type="NCBIfam" id="TIGR00516">
    <property type="entry name" value="acpS"/>
    <property type="match status" value="1"/>
</dbReference>
<dbReference type="NCBIfam" id="TIGR00556">
    <property type="entry name" value="pantethn_trn"/>
    <property type="match status" value="1"/>
</dbReference>
<dbReference type="Pfam" id="PF01648">
    <property type="entry name" value="ACPS"/>
    <property type="match status" value="1"/>
</dbReference>
<dbReference type="SUPFAM" id="SSF56214">
    <property type="entry name" value="4'-phosphopantetheinyl transferase"/>
    <property type="match status" value="1"/>
</dbReference>
<protein>
    <recommendedName>
        <fullName evidence="1">Holo-[acyl-carrier-protein] synthase</fullName>
        <shortName evidence="1">Holo-ACP synthase</shortName>
        <ecNumber evidence="1">2.7.8.7</ecNumber>
    </recommendedName>
    <alternativeName>
        <fullName evidence="1">4'-phosphopantetheinyl transferase AcpS</fullName>
    </alternativeName>
</protein>
<organism>
    <name type="scientific">Staphylococcus saprophyticus subsp. saprophyticus (strain ATCC 15305 / DSM 20229 / NCIMB 8711 / NCTC 7292 / S-41)</name>
    <dbReference type="NCBI Taxonomy" id="342451"/>
    <lineage>
        <taxon>Bacteria</taxon>
        <taxon>Bacillati</taxon>
        <taxon>Bacillota</taxon>
        <taxon>Bacilli</taxon>
        <taxon>Bacillales</taxon>
        <taxon>Staphylococcaceae</taxon>
        <taxon>Staphylococcus</taxon>
    </lineage>
</organism>
<keyword id="KW-0963">Cytoplasm</keyword>
<keyword id="KW-0275">Fatty acid biosynthesis</keyword>
<keyword id="KW-0276">Fatty acid metabolism</keyword>
<keyword id="KW-0444">Lipid biosynthesis</keyword>
<keyword id="KW-0443">Lipid metabolism</keyword>
<keyword id="KW-0460">Magnesium</keyword>
<keyword id="KW-0479">Metal-binding</keyword>
<keyword id="KW-1185">Reference proteome</keyword>
<keyword id="KW-0808">Transferase</keyword>
<evidence type="ECO:0000255" key="1">
    <source>
        <dbReference type="HAMAP-Rule" id="MF_00101"/>
    </source>
</evidence>
<sequence length="116" mass="13271">MIHGIGVDLIEISRIKNLYKRQSKLVDRILTINEQHKFNQFNNEQRKMEFLAGRFATKEAFSKALGSGLGKTVSFTDIDCVNDEDGKPCIHYEGYKVHVSISHTEHYAMSQVILEV</sequence>
<accession>Q49Z25</accession>
<comment type="function">
    <text evidence="1">Transfers the 4'-phosphopantetheine moiety from coenzyme A to a Ser of acyl-carrier-protein.</text>
</comment>
<comment type="catalytic activity">
    <reaction evidence="1">
        <text>apo-[ACP] + CoA = holo-[ACP] + adenosine 3',5'-bisphosphate + H(+)</text>
        <dbReference type="Rhea" id="RHEA:12068"/>
        <dbReference type="Rhea" id="RHEA-COMP:9685"/>
        <dbReference type="Rhea" id="RHEA-COMP:9690"/>
        <dbReference type="ChEBI" id="CHEBI:15378"/>
        <dbReference type="ChEBI" id="CHEBI:29999"/>
        <dbReference type="ChEBI" id="CHEBI:57287"/>
        <dbReference type="ChEBI" id="CHEBI:58343"/>
        <dbReference type="ChEBI" id="CHEBI:64479"/>
        <dbReference type="EC" id="2.7.8.7"/>
    </reaction>
</comment>
<comment type="cofactor">
    <cofactor evidence="1">
        <name>Mg(2+)</name>
        <dbReference type="ChEBI" id="CHEBI:18420"/>
    </cofactor>
</comment>
<comment type="subcellular location">
    <subcellularLocation>
        <location evidence="1">Cytoplasm</location>
    </subcellularLocation>
</comment>
<comment type="similarity">
    <text evidence="1">Belongs to the P-Pant transferase superfamily. AcpS family.</text>
</comment>
<name>ACPS_STAS1</name>
<gene>
    <name evidence="1" type="primary">acpS</name>
    <name type="ordered locus">SSP0806</name>
</gene>
<reference key="1">
    <citation type="journal article" date="2005" name="Proc. Natl. Acad. Sci. U.S.A.">
        <title>Whole genome sequence of Staphylococcus saprophyticus reveals the pathogenesis of uncomplicated urinary tract infection.</title>
        <authorList>
            <person name="Kuroda M."/>
            <person name="Yamashita A."/>
            <person name="Hirakawa H."/>
            <person name="Kumano M."/>
            <person name="Morikawa K."/>
            <person name="Higashide M."/>
            <person name="Maruyama A."/>
            <person name="Inose Y."/>
            <person name="Matoba K."/>
            <person name="Toh H."/>
            <person name="Kuhara S."/>
            <person name="Hattori M."/>
            <person name="Ohta T."/>
        </authorList>
    </citation>
    <scope>NUCLEOTIDE SEQUENCE [LARGE SCALE GENOMIC DNA]</scope>
    <source>
        <strain>ATCC 15305 / DSM 20229 / NCIMB 8711 / NCTC 7292 / S-41</strain>
    </source>
</reference>